<accession>Q9VXF1</accession>
<accession>Q27573</accession>
<accession>Q86NL0</accession>
<evidence type="ECO:0000250" key="1"/>
<evidence type="ECO:0000250" key="2">
    <source>
        <dbReference type="UniProtKB" id="Q08209"/>
    </source>
</evidence>
<evidence type="ECO:0000255" key="3"/>
<evidence type="ECO:0000256" key="4">
    <source>
        <dbReference type="SAM" id="MobiDB-lite"/>
    </source>
</evidence>
<evidence type="ECO:0000269" key="5">
    <source>
    </source>
</evidence>
<evidence type="ECO:0000269" key="6">
    <source>
    </source>
</evidence>
<evidence type="ECO:0000269" key="7">
    <source>
    </source>
</evidence>
<evidence type="ECO:0000269" key="8">
    <source>
    </source>
</evidence>
<evidence type="ECO:0000269" key="9">
    <source>
    </source>
</evidence>
<evidence type="ECO:0000303" key="10">
    <source>
    </source>
</evidence>
<evidence type="ECO:0000305" key="11"/>
<evidence type="ECO:0000312" key="12">
    <source>
        <dbReference type="EMBL" id="AAC47079.1"/>
    </source>
</evidence>
<evidence type="ECO:0000312" key="13">
    <source>
        <dbReference type="EMBL" id="AAF48623.4"/>
    </source>
</evidence>
<evidence type="ECO:0000312" key="14">
    <source>
        <dbReference type="EMBL" id="AAO45220.1"/>
    </source>
</evidence>
<evidence type="ECO:0000312" key="15">
    <source>
        <dbReference type="FlyBase" id="FBgn0267912"/>
    </source>
</evidence>
<gene>
    <name evidence="13 15" type="primary">CanA-14F</name>
    <name evidence="10" type="synonym">CnnA14D</name>
    <name type="ORF">CG9819</name>
</gene>
<comment type="function">
    <text evidence="6">Calcium-dependent, calmodulin-stimulated protein phosphatase. This subunit may have a role in the calmodulin activation of calcineurin.</text>
</comment>
<comment type="catalytic activity">
    <reaction>
        <text>O-phospho-L-seryl-[protein] + H2O = L-seryl-[protein] + phosphate</text>
        <dbReference type="Rhea" id="RHEA:20629"/>
        <dbReference type="Rhea" id="RHEA-COMP:9863"/>
        <dbReference type="Rhea" id="RHEA-COMP:11604"/>
        <dbReference type="ChEBI" id="CHEBI:15377"/>
        <dbReference type="ChEBI" id="CHEBI:29999"/>
        <dbReference type="ChEBI" id="CHEBI:43474"/>
        <dbReference type="ChEBI" id="CHEBI:83421"/>
        <dbReference type="EC" id="3.1.3.16"/>
    </reaction>
</comment>
<comment type="catalytic activity">
    <reaction>
        <text>O-phospho-L-threonyl-[protein] + H2O = L-threonyl-[protein] + phosphate</text>
        <dbReference type="Rhea" id="RHEA:47004"/>
        <dbReference type="Rhea" id="RHEA-COMP:11060"/>
        <dbReference type="Rhea" id="RHEA-COMP:11605"/>
        <dbReference type="ChEBI" id="CHEBI:15377"/>
        <dbReference type="ChEBI" id="CHEBI:30013"/>
        <dbReference type="ChEBI" id="CHEBI:43474"/>
        <dbReference type="ChEBI" id="CHEBI:61977"/>
        <dbReference type="EC" id="3.1.3.16"/>
    </reaction>
</comment>
<comment type="cofactor">
    <cofactor evidence="1">
        <name>Fe(3+)</name>
        <dbReference type="ChEBI" id="CHEBI:29034"/>
    </cofactor>
    <text evidence="1">Binds 1 Fe(3+) ion per subunit.</text>
</comment>
<comment type="cofactor">
    <cofactor evidence="2">
        <name>Zn(2+)</name>
        <dbReference type="ChEBI" id="CHEBI:29105"/>
    </cofactor>
    <text evidence="2">Binds 1 zinc ion per subunit.</text>
</comment>
<comment type="subunit">
    <text evidence="6 8">Interacts with sra in a complex that contains Pp2B-14D.</text>
</comment>
<comment type="developmental stage">
    <text evidence="9">Expressed both maternally and zygotically in embryos, larvae and adults.</text>
</comment>
<comment type="similarity">
    <text evidence="3">Belongs to the PPP phosphatase family. PP-2B subfamily.</text>
</comment>
<keyword id="KW-0106">Calcium</keyword>
<keyword id="KW-0112">Calmodulin-binding</keyword>
<keyword id="KW-0378">Hydrolase</keyword>
<keyword id="KW-0408">Iron</keyword>
<keyword id="KW-0479">Metal-binding</keyword>
<keyword id="KW-0597">Phosphoprotein</keyword>
<keyword id="KW-0904">Protein phosphatase</keyword>
<keyword id="KW-1185">Reference proteome</keyword>
<keyword id="KW-0862">Zinc</keyword>
<dbReference type="EC" id="3.1.3.16"/>
<dbReference type="EMBL" id="U30493">
    <property type="protein sequence ID" value="AAC47079.1"/>
    <property type="molecule type" value="mRNA"/>
</dbReference>
<dbReference type="EMBL" id="AE014298">
    <property type="protein sequence ID" value="AAF48623.4"/>
    <property type="molecule type" value="Genomic_DNA"/>
</dbReference>
<dbReference type="EMBL" id="AE014298">
    <property type="protein sequence ID" value="AAN09410.2"/>
    <property type="molecule type" value="Genomic_DNA"/>
</dbReference>
<dbReference type="EMBL" id="BT004864">
    <property type="protein sequence ID" value="AAO45220.1"/>
    <property type="molecule type" value="mRNA"/>
</dbReference>
<dbReference type="PIR" id="S70554">
    <property type="entry name" value="S70554"/>
</dbReference>
<dbReference type="RefSeq" id="NP_001245717.1">
    <property type="nucleotide sequence ID" value="NM_001258788.2"/>
</dbReference>
<dbReference type="RefSeq" id="NP_001259622.1">
    <property type="nucleotide sequence ID" value="NM_001272693.2"/>
</dbReference>
<dbReference type="RefSeq" id="NP_727985.2">
    <property type="nucleotide sequence ID" value="NM_167523.3"/>
</dbReference>
<dbReference type="RefSeq" id="NP_727986.2">
    <property type="nucleotide sequence ID" value="NM_167524.3"/>
</dbReference>
<dbReference type="SMR" id="Q9VXF1"/>
<dbReference type="BioGRID" id="1073112">
    <property type="interactions" value="5"/>
</dbReference>
<dbReference type="FunCoup" id="Q9VXF1">
    <property type="interactions" value="805"/>
</dbReference>
<dbReference type="IntAct" id="Q9VXF1">
    <property type="interactions" value="1"/>
</dbReference>
<dbReference type="STRING" id="7227.FBpp0293728"/>
<dbReference type="iPTMnet" id="Q9VXF1"/>
<dbReference type="PaxDb" id="7227-FBpp0293728"/>
<dbReference type="DNASU" id="8674098"/>
<dbReference type="EnsemblMetazoa" id="FBtr0074292">
    <property type="protein sequence ID" value="FBpp0074067"/>
    <property type="gene ID" value="FBgn0267912"/>
</dbReference>
<dbReference type="EnsemblMetazoa" id="FBtr0074293">
    <property type="protein sequence ID" value="FBpp0074068"/>
    <property type="gene ID" value="FBgn0267912"/>
</dbReference>
<dbReference type="EnsemblMetazoa" id="FBtr0305198">
    <property type="protein sequence ID" value="FBpp0293728"/>
    <property type="gene ID" value="FBgn0267912"/>
</dbReference>
<dbReference type="EnsemblMetazoa" id="FBtr0332870">
    <property type="protein sequence ID" value="FBpp0305092"/>
    <property type="gene ID" value="FBgn0267912"/>
</dbReference>
<dbReference type="GeneID" id="8674098"/>
<dbReference type="KEGG" id="dme:Dmel_CG9819"/>
<dbReference type="AGR" id="FB:FBgn0267912"/>
<dbReference type="CTD" id="8674098"/>
<dbReference type="FlyBase" id="FBgn0267912">
    <property type="gene designation" value="CanA-14F"/>
</dbReference>
<dbReference type="VEuPathDB" id="VectorBase:FBgn0267912"/>
<dbReference type="eggNOG" id="KOG0375">
    <property type="taxonomic scope" value="Eukaryota"/>
</dbReference>
<dbReference type="GeneTree" id="ENSGT00940000154115"/>
<dbReference type="HOGENOM" id="CLU_004962_6_0_1"/>
<dbReference type="InParanoid" id="Q9VXF1"/>
<dbReference type="OMA" id="KQMTGQN"/>
<dbReference type="OrthoDB" id="5593063at2759"/>
<dbReference type="PhylomeDB" id="Q9VXF1"/>
<dbReference type="Reactome" id="R-DME-2025928">
    <property type="pathway name" value="Calcineurin activates NFAT"/>
</dbReference>
<dbReference type="Reactome" id="R-DME-2871809">
    <property type="pathway name" value="FCERI mediated Ca+2 mobilization"/>
</dbReference>
<dbReference type="Reactome" id="R-DME-4086398">
    <property type="pathway name" value="Ca2+ pathway"/>
</dbReference>
<dbReference type="Reactome" id="R-DME-5607763">
    <property type="pathway name" value="CLEC7A (Dectin-1) induces NFAT activation"/>
</dbReference>
<dbReference type="SignaLink" id="Q9VXF1"/>
<dbReference type="BioGRID-ORCS" id="8674098">
    <property type="hits" value="0 hits in 3 CRISPR screens"/>
</dbReference>
<dbReference type="ChiTaRS" id="CanA-14F">
    <property type="organism name" value="fly"/>
</dbReference>
<dbReference type="GenomeRNAi" id="8674098"/>
<dbReference type="PRO" id="PR:Q9VXF1"/>
<dbReference type="Proteomes" id="UP000000803">
    <property type="component" value="Chromosome X"/>
</dbReference>
<dbReference type="Bgee" id="FBgn0267912">
    <property type="expression patterns" value="Expressed in adult oenocyte (Drosophila) in body wall and 284 other cell types or tissues"/>
</dbReference>
<dbReference type="ExpressionAtlas" id="Q9VXF1">
    <property type="expression patterns" value="baseline and differential"/>
</dbReference>
<dbReference type="GO" id="GO:0005955">
    <property type="term" value="C:calcineurin complex"/>
    <property type="evidence" value="ECO:0000318"/>
    <property type="project" value="GO_Central"/>
</dbReference>
<dbReference type="GO" id="GO:0005737">
    <property type="term" value="C:cytoplasm"/>
    <property type="evidence" value="ECO:0000318"/>
    <property type="project" value="GO_Central"/>
</dbReference>
<dbReference type="GO" id="GO:0005516">
    <property type="term" value="F:calmodulin binding"/>
    <property type="evidence" value="ECO:0000318"/>
    <property type="project" value="GO_Central"/>
</dbReference>
<dbReference type="GO" id="GO:0033192">
    <property type="term" value="F:calmodulin-dependent protein phosphatase activity"/>
    <property type="evidence" value="ECO:0000315"/>
    <property type="project" value="UniProtKB"/>
</dbReference>
<dbReference type="GO" id="GO:0046872">
    <property type="term" value="F:metal ion binding"/>
    <property type="evidence" value="ECO:0007669"/>
    <property type="project" value="UniProtKB-KW"/>
</dbReference>
<dbReference type="GO" id="GO:0004722">
    <property type="term" value="F:protein serine/threonine phosphatase activity"/>
    <property type="evidence" value="ECO:0000250"/>
    <property type="project" value="FlyBase"/>
</dbReference>
<dbReference type="GO" id="GO:0097720">
    <property type="term" value="P:calcineurin-mediated signaling"/>
    <property type="evidence" value="ECO:0000318"/>
    <property type="project" value="GO_Central"/>
</dbReference>
<dbReference type="GO" id="GO:0030431">
    <property type="term" value="P:sleep"/>
    <property type="evidence" value="ECO:0000314"/>
    <property type="project" value="FlyBase"/>
</dbReference>
<dbReference type="CDD" id="cd07416">
    <property type="entry name" value="MPP_PP2B"/>
    <property type="match status" value="1"/>
</dbReference>
<dbReference type="FunFam" id="3.60.21.10:FF:000002">
    <property type="entry name" value="Serine/threonine-protein phosphatase"/>
    <property type="match status" value="1"/>
</dbReference>
<dbReference type="Gene3D" id="3.60.21.10">
    <property type="match status" value="1"/>
</dbReference>
<dbReference type="InterPro" id="IPR004843">
    <property type="entry name" value="Calcineurin-like_PHP_ApaH"/>
</dbReference>
<dbReference type="InterPro" id="IPR029052">
    <property type="entry name" value="Metallo-depent_PP-like"/>
</dbReference>
<dbReference type="InterPro" id="IPR041751">
    <property type="entry name" value="MPP_PP2B"/>
</dbReference>
<dbReference type="InterPro" id="IPR043360">
    <property type="entry name" value="PP2B"/>
</dbReference>
<dbReference type="InterPro" id="IPR006186">
    <property type="entry name" value="Ser/Thr-sp_prot-phosphatase"/>
</dbReference>
<dbReference type="PANTHER" id="PTHR45673">
    <property type="entry name" value="SERINE/THREONINE-PROTEIN PHOSPHATASE 2B CATALYTIC SUBUNIT 1-RELATED"/>
    <property type="match status" value="1"/>
</dbReference>
<dbReference type="Pfam" id="PF00149">
    <property type="entry name" value="Metallophos"/>
    <property type="match status" value="1"/>
</dbReference>
<dbReference type="PRINTS" id="PR00114">
    <property type="entry name" value="STPHPHTASE"/>
</dbReference>
<dbReference type="SMART" id="SM00156">
    <property type="entry name" value="PP2Ac"/>
    <property type="match status" value="1"/>
</dbReference>
<dbReference type="SUPFAM" id="SSF56300">
    <property type="entry name" value="Metallo-dependent phosphatases"/>
    <property type="match status" value="1"/>
</dbReference>
<dbReference type="PROSITE" id="PS00125">
    <property type="entry name" value="SER_THR_PHOSPHATASE"/>
    <property type="match status" value="1"/>
</dbReference>
<sequence length="584" mass="64285">MSSPAAQSNSSSSQSQSAAQQQQQQNQKANVNNTHDNKNAAATTGTAAGSGSGGAAGSAGTQQQGQGGTGTSSGPSSPTKRSTISTKERVIDSVAFPPSRKLTCADVFDARTGKPQHDVLKQHFILEGRIEESAALRIIQEGATLLRTEKTMIDIEAPVTVCGDIHGQFYDLMKLFEIGGSPATTKYLFLGDYVDRGYFSIECVLYLWSLKITYPQTLFLLRGNHECRHLTEYFTFKQECKIKYSERVYDACMDAFDCLPLAALMNQQFLCVHGGLSPEIHELEDIRRLDRFKEPPAFGPMCDLLWSDPLEDFGNEKNSDFYTHNSVRGCSYFYSYAACCDFLQNNNLLSIIRAHEAQDAGYRMYRKSQTTGFPSLITIFSAPNYLDVYNNKAAVLKYENNVMNIRQFNCSPHPYWLPNFMDVFTWSLPFVGEKVTEMLVNVLNICSDDELMTEESEEPLSDDEAALRKEVIRNKIRAIGKMARVFSVLREESESVLQLKGLTPTGALPLGALSGGKQSLKNAMQGFSPNHKITSFAEAKGLDAVNERMPPRRDATPSPAEEGQKSLSAAAAAAANANANSING</sequence>
<proteinExistence type="evidence at protein level"/>
<feature type="chain" id="PRO_0000308356" description="Serine/threonine-protein phosphatase 2B catalytic subunit 3">
    <location>
        <begin position="1"/>
        <end position="584"/>
    </location>
</feature>
<feature type="region of interest" description="Disordered" evidence="4">
    <location>
        <begin position="1"/>
        <end position="89"/>
    </location>
</feature>
<feature type="region of interest" description="Disordered" evidence="4">
    <location>
        <begin position="546"/>
        <end position="584"/>
    </location>
</feature>
<feature type="compositionally biased region" description="Low complexity" evidence="4">
    <location>
        <begin position="1"/>
        <end position="33"/>
    </location>
</feature>
<feature type="compositionally biased region" description="Gly residues" evidence="4">
    <location>
        <begin position="48"/>
        <end position="57"/>
    </location>
</feature>
<feature type="compositionally biased region" description="Basic and acidic residues" evidence="4">
    <location>
        <begin position="546"/>
        <end position="555"/>
    </location>
</feature>
<feature type="compositionally biased region" description="Low complexity" evidence="4">
    <location>
        <begin position="569"/>
        <end position="584"/>
    </location>
</feature>
<feature type="active site" description="Proton donor" evidence="2">
    <location>
        <position position="225"/>
    </location>
</feature>
<feature type="binding site" evidence="2">
    <location>
        <position position="164"/>
    </location>
    <ligand>
        <name>Fe cation</name>
        <dbReference type="ChEBI" id="CHEBI:24875"/>
    </ligand>
</feature>
<feature type="binding site" evidence="2">
    <location>
        <position position="166"/>
    </location>
    <ligand>
        <name>Fe cation</name>
        <dbReference type="ChEBI" id="CHEBI:24875"/>
    </ligand>
</feature>
<feature type="binding site" evidence="2">
    <location>
        <position position="192"/>
    </location>
    <ligand>
        <name>Fe cation</name>
        <dbReference type="ChEBI" id="CHEBI:24875"/>
    </ligand>
</feature>
<feature type="binding site" evidence="2">
    <location>
        <position position="192"/>
    </location>
    <ligand>
        <name>Zn(2+)</name>
        <dbReference type="ChEBI" id="CHEBI:29105"/>
    </ligand>
</feature>
<feature type="binding site" evidence="2">
    <location>
        <position position="224"/>
    </location>
    <ligand>
        <name>Zn(2+)</name>
        <dbReference type="ChEBI" id="CHEBI:29105"/>
    </ligand>
</feature>
<feature type="binding site" evidence="2">
    <location>
        <position position="273"/>
    </location>
    <ligand>
        <name>Zn(2+)</name>
        <dbReference type="ChEBI" id="CHEBI:29105"/>
    </ligand>
</feature>
<feature type="binding site" evidence="2">
    <location>
        <position position="355"/>
    </location>
    <ligand>
        <name>Zn(2+)</name>
        <dbReference type="ChEBI" id="CHEBI:29105"/>
    </ligand>
</feature>
<feature type="modified residue" description="Phosphothreonine" evidence="7">
    <location>
        <position position="61"/>
    </location>
</feature>
<feature type="sequence conflict" description="In Ref. 1; AAC47079." evidence="11" ref="1">
    <original>ATPSPAEEGQKSLSAAAAAAANANANSING</original>
    <variation>QPPTPSEDPNQHSQQGGKNGAGHG</variation>
    <location>
        <begin position="555"/>
        <end position="584"/>
    </location>
</feature>
<reference evidence="11 12" key="1">
    <citation type="journal article" date="1996" name="Genetics">
        <title>Molecular characterization of neurally expressing genes in the para sodium channel gene cluster of Drosophila.</title>
        <authorList>
            <person name="Hong C.-S."/>
            <person name="Ganetzky B."/>
        </authorList>
    </citation>
    <scope>NUCLEOTIDE SEQUENCE [MRNA]</scope>
    <scope>DEVELOPMENTAL STAGE</scope>
    <source>
        <strain evidence="12">Canton-S</strain>
    </source>
</reference>
<reference evidence="13" key="2">
    <citation type="journal article" date="2000" name="Science">
        <title>The genome sequence of Drosophila melanogaster.</title>
        <authorList>
            <person name="Adams M.D."/>
            <person name="Celniker S.E."/>
            <person name="Holt R.A."/>
            <person name="Evans C.A."/>
            <person name="Gocayne J.D."/>
            <person name="Amanatides P.G."/>
            <person name="Scherer S.E."/>
            <person name="Li P.W."/>
            <person name="Hoskins R.A."/>
            <person name="Galle R.F."/>
            <person name="George R.A."/>
            <person name="Lewis S.E."/>
            <person name="Richards S."/>
            <person name="Ashburner M."/>
            <person name="Henderson S.N."/>
            <person name="Sutton G.G."/>
            <person name="Wortman J.R."/>
            <person name="Yandell M.D."/>
            <person name="Zhang Q."/>
            <person name="Chen L.X."/>
            <person name="Brandon R.C."/>
            <person name="Rogers Y.-H.C."/>
            <person name="Blazej R.G."/>
            <person name="Champe M."/>
            <person name="Pfeiffer B.D."/>
            <person name="Wan K.H."/>
            <person name="Doyle C."/>
            <person name="Baxter E.G."/>
            <person name="Helt G."/>
            <person name="Nelson C.R."/>
            <person name="Miklos G.L.G."/>
            <person name="Abril J.F."/>
            <person name="Agbayani A."/>
            <person name="An H.-J."/>
            <person name="Andrews-Pfannkoch C."/>
            <person name="Baldwin D."/>
            <person name="Ballew R.M."/>
            <person name="Basu A."/>
            <person name="Baxendale J."/>
            <person name="Bayraktaroglu L."/>
            <person name="Beasley E.M."/>
            <person name="Beeson K.Y."/>
            <person name="Benos P.V."/>
            <person name="Berman B.P."/>
            <person name="Bhandari D."/>
            <person name="Bolshakov S."/>
            <person name="Borkova D."/>
            <person name="Botchan M.R."/>
            <person name="Bouck J."/>
            <person name="Brokstein P."/>
            <person name="Brottier P."/>
            <person name="Burtis K.C."/>
            <person name="Busam D.A."/>
            <person name="Butler H."/>
            <person name="Cadieu E."/>
            <person name="Center A."/>
            <person name="Chandra I."/>
            <person name="Cherry J.M."/>
            <person name="Cawley S."/>
            <person name="Dahlke C."/>
            <person name="Davenport L.B."/>
            <person name="Davies P."/>
            <person name="de Pablos B."/>
            <person name="Delcher A."/>
            <person name="Deng Z."/>
            <person name="Mays A.D."/>
            <person name="Dew I."/>
            <person name="Dietz S.M."/>
            <person name="Dodson K."/>
            <person name="Doup L.E."/>
            <person name="Downes M."/>
            <person name="Dugan-Rocha S."/>
            <person name="Dunkov B.C."/>
            <person name="Dunn P."/>
            <person name="Durbin K.J."/>
            <person name="Evangelista C.C."/>
            <person name="Ferraz C."/>
            <person name="Ferriera S."/>
            <person name="Fleischmann W."/>
            <person name="Fosler C."/>
            <person name="Gabrielian A.E."/>
            <person name="Garg N.S."/>
            <person name="Gelbart W.M."/>
            <person name="Glasser K."/>
            <person name="Glodek A."/>
            <person name="Gong F."/>
            <person name="Gorrell J.H."/>
            <person name="Gu Z."/>
            <person name="Guan P."/>
            <person name="Harris M."/>
            <person name="Harris N.L."/>
            <person name="Harvey D.A."/>
            <person name="Heiman T.J."/>
            <person name="Hernandez J.R."/>
            <person name="Houck J."/>
            <person name="Hostin D."/>
            <person name="Houston K.A."/>
            <person name="Howland T.J."/>
            <person name="Wei M.-H."/>
            <person name="Ibegwam C."/>
            <person name="Jalali M."/>
            <person name="Kalush F."/>
            <person name="Karpen G.H."/>
            <person name="Ke Z."/>
            <person name="Kennison J.A."/>
            <person name="Ketchum K.A."/>
            <person name="Kimmel B.E."/>
            <person name="Kodira C.D."/>
            <person name="Kraft C.L."/>
            <person name="Kravitz S."/>
            <person name="Kulp D."/>
            <person name="Lai Z."/>
            <person name="Lasko P."/>
            <person name="Lei Y."/>
            <person name="Levitsky A.A."/>
            <person name="Li J.H."/>
            <person name="Li Z."/>
            <person name="Liang Y."/>
            <person name="Lin X."/>
            <person name="Liu X."/>
            <person name="Mattei B."/>
            <person name="McIntosh T.C."/>
            <person name="McLeod M.P."/>
            <person name="McPherson D."/>
            <person name="Merkulov G."/>
            <person name="Milshina N.V."/>
            <person name="Mobarry C."/>
            <person name="Morris J."/>
            <person name="Moshrefi A."/>
            <person name="Mount S.M."/>
            <person name="Moy M."/>
            <person name="Murphy B."/>
            <person name="Murphy L."/>
            <person name="Muzny D.M."/>
            <person name="Nelson D.L."/>
            <person name="Nelson D.R."/>
            <person name="Nelson K.A."/>
            <person name="Nixon K."/>
            <person name="Nusskern D.R."/>
            <person name="Pacleb J.M."/>
            <person name="Palazzolo M."/>
            <person name="Pittman G.S."/>
            <person name="Pan S."/>
            <person name="Pollard J."/>
            <person name="Puri V."/>
            <person name="Reese M.G."/>
            <person name="Reinert K."/>
            <person name="Remington K."/>
            <person name="Saunders R.D.C."/>
            <person name="Scheeler F."/>
            <person name="Shen H."/>
            <person name="Shue B.C."/>
            <person name="Siden-Kiamos I."/>
            <person name="Simpson M."/>
            <person name="Skupski M.P."/>
            <person name="Smith T.J."/>
            <person name="Spier E."/>
            <person name="Spradling A.C."/>
            <person name="Stapleton M."/>
            <person name="Strong R."/>
            <person name="Sun E."/>
            <person name="Svirskas R."/>
            <person name="Tector C."/>
            <person name="Turner R."/>
            <person name="Venter E."/>
            <person name="Wang A.H."/>
            <person name="Wang X."/>
            <person name="Wang Z.-Y."/>
            <person name="Wassarman D.A."/>
            <person name="Weinstock G.M."/>
            <person name="Weissenbach J."/>
            <person name="Williams S.M."/>
            <person name="Woodage T."/>
            <person name="Worley K.C."/>
            <person name="Wu D."/>
            <person name="Yang S."/>
            <person name="Yao Q.A."/>
            <person name="Ye J."/>
            <person name="Yeh R.-F."/>
            <person name="Zaveri J.S."/>
            <person name="Zhan M."/>
            <person name="Zhang G."/>
            <person name="Zhao Q."/>
            <person name="Zheng L."/>
            <person name="Zheng X.H."/>
            <person name="Zhong F.N."/>
            <person name="Zhong W."/>
            <person name="Zhou X."/>
            <person name="Zhu S.C."/>
            <person name="Zhu X."/>
            <person name="Smith H.O."/>
            <person name="Gibbs R.A."/>
            <person name="Myers E.W."/>
            <person name="Rubin G.M."/>
            <person name="Venter J.C."/>
        </authorList>
    </citation>
    <scope>NUCLEOTIDE SEQUENCE [LARGE SCALE GENOMIC DNA]</scope>
    <source>
        <strain evidence="5">Berkeley</strain>
    </source>
</reference>
<reference evidence="11 13" key="3">
    <citation type="journal article" date="2002" name="Genome Biol.">
        <title>Annotation of the Drosophila melanogaster euchromatic genome: a systematic review.</title>
        <authorList>
            <person name="Misra S."/>
            <person name="Crosby M.A."/>
            <person name="Mungall C.J."/>
            <person name="Matthews B.B."/>
            <person name="Campbell K.S."/>
            <person name="Hradecky P."/>
            <person name="Huang Y."/>
            <person name="Kaminker J.S."/>
            <person name="Millburn G.H."/>
            <person name="Prochnik S.E."/>
            <person name="Smith C.D."/>
            <person name="Tupy J.L."/>
            <person name="Whitfield E.J."/>
            <person name="Bayraktaroglu L."/>
            <person name="Berman B.P."/>
            <person name="Bettencourt B.R."/>
            <person name="Celniker S.E."/>
            <person name="de Grey A.D.N.J."/>
            <person name="Drysdale R.A."/>
            <person name="Harris N.L."/>
            <person name="Richter J."/>
            <person name="Russo S."/>
            <person name="Schroeder A.J."/>
            <person name="Shu S.Q."/>
            <person name="Stapleton M."/>
            <person name="Yamada C."/>
            <person name="Ashburner M."/>
            <person name="Gelbart W.M."/>
            <person name="Rubin G.M."/>
            <person name="Lewis S.E."/>
        </authorList>
    </citation>
    <scope>GENOME REANNOTATION</scope>
    <source>
        <strain>Berkeley</strain>
    </source>
</reference>
<reference evidence="14" key="4">
    <citation type="submission" date="2003-02" db="EMBL/GenBank/DDBJ databases">
        <authorList>
            <person name="Stapleton M."/>
            <person name="Brokstein P."/>
            <person name="Hong L."/>
            <person name="Agbayani A."/>
            <person name="Carlson J.W."/>
            <person name="Champe M."/>
            <person name="Chavez C."/>
            <person name="Dorsett V."/>
            <person name="Dresnek D."/>
            <person name="Farfan D."/>
            <person name="Frise E."/>
            <person name="George R.A."/>
            <person name="Gonzalez M."/>
            <person name="Guarin H."/>
            <person name="Kronmiller B."/>
            <person name="Li P.W."/>
            <person name="Liao G."/>
            <person name="Miranda A."/>
            <person name="Mungall C.J."/>
            <person name="Nunoo J."/>
            <person name="Pacleb J.M."/>
            <person name="Paragas V."/>
            <person name="Park S."/>
            <person name="Patel S."/>
            <person name="Phouanenavong S."/>
            <person name="Wan K.H."/>
            <person name="Yu C."/>
            <person name="Lewis S.E."/>
            <person name="Rubin G.M."/>
            <person name="Celniker S.E."/>
        </authorList>
    </citation>
    <scope>NUCLEOTIDE SEQUENCE [LARGE SCALE MRNA]</scope>
    <source>
        <strain evidence="14">Berkeley</strain>
        <tissue>Embryo</tissue>
    </source>
</reference>
<reference evidence="11" key="5">
    <citation type="journal article" date="2006" name="Curr. Biol.">
        <title>The calcineurin regulator sra plays an essential role in female meiosis in Drosophila.</title>
        <authorList>
            <person name="Takeo S."/>
            <person name="Tsuda M."/>
            <person name="Akahori S."/>
            <person name="Matsuo T."/>
            <person name="Aigaki T."/>
        </authorList>
    </citation>
    <scope>FUNCTION</scope>
    <scope>INTERACTION WITH SRA</scope>
</reference>
<reference key="6">
    <citation type="journal article" date="2008" name="J. Proteome Res.">
        <title>Phosphoproteome analysis of Drosophila melanogaster embryos.</title>
        <authorList>
            <person name="Zhai B."/>
            <person name="Villen J."/>
            <person name="Beausoleil S.A."/>
            <person name="Mintseris J."/>
            <person name="Gygi S.P."/>
        </authorList>
    </citation>
    <scope>PHOSPHORYLATION [LARGE SCALE ANALYSIS] AT THR-61</scope>
    <scope>IDENTIFICATION BY MASS SPECTROMETRY</scope>
    <source>
        <tissue>Embryo</tissue>
    </source>
</reference>
<reference key="7">
    <citation type="journal article" date="2012" name="Proc. Natl. Acad. Sci. U.S.A.">
        <title>Shaggy/glycogen synthase kinase 3beta and phosphorylation of Sarah/regulator of calcineurin are essential for completion of Drosophila female meiosis.</title>
        <authorList>
            <person name="Takeo S."/>
            <person name="Swanson S.K."/>
            <person name="Nandanan K."/>
            <person name="Nakai Y."/>
            <person name="Aigaki T."/>
            <person name="Washburn M.P."/>
            <person name="Florens L."/>
            <person name="Hawley R.S."/>
        </authorList>
    </citation>
    <scope>INTERACTION WITH SRA</scope>
</reference>
<organism>
    <name type="scientific">Drosophila melanogaster</name>
    <name type="common">Fruit fly</name>
    <dbReference type="NCBI Taxonomy" id="7227"/>
    <lineage>
        <taxon>Eukaryota</taxon>
        <taxon>Metazoa</taxon>
        <taxon>Ecdysozoa</taxon>
        <taxon>Arthropoda</taxon>
        <taxon>Hexapoda</taxon>
        <taxon>Insecta</taxon>
        <taxon>Pterygota</taxon>
        <taxon>Neoptera</taxon>
        <taxon>Endopterygota</taxon>
        <taxon>Diptera</taxon>
        <taxon>Brachycera</taxon>
        <taxon>Muscomorpha</taxon>
        <taxon>Ephydroidea</taxon>
        <taxon>Drosophilidae</taxon>
        <taxon>Drosophila</taxon>
        <taxon>Sophophora</taxon>
    </lineage>
</organism>
<protein>
    <recommendedName>
        <fullName>Serine/threonine-protein phosphatase 2B catalytic subunit 3</fullName>
        <ecNumber>3.1.3.16</ecNumber>
    </recommendedName>
    <alternativeName>
        <fullName>Calmodulin-dependent calcineurin A3 subunit</fullName>
    </alternativeName>
</protein>
<name>PP2B3_DROME</name>